<organism>
    <name type="scientific">Escherichia coli (strain K12 / MC4100 / BW2952)</name>
    <dbReference type="NCBI Taxonomy" id="595496"/>
    <lineage>
        <taxon>Bacteria</taxon>
        <taxon>Pseudomonadati</taxon>
        <taxon>Pseudomonadota</taxon>
        <taxon>Gammaproteobacteria</taxon>
        <taxon>Enterobacterales</taxon>
        <taxon>Enterobacteriaceae</taxon>
        <taxon>Escherichia</taxon>
    </lineage>
</organism>
<gene>
    <name evidence="1" type="primary">yggX</name>
    <name type="ordered locus">BWG_2684</name>
</gene>
<evidence type="ECO:0000255" key="1">
    <source>
        <dbReference type="HAMAP-Rule" id="MF_00686"/>
    </source>
</evidence>
<keyword id="KW-0408">Iron</keyword>
<reference key="1">
    <citation type="journal article" date="2009" name="J. Bacteriol.">
        <title>Genomic sequencing reveals regulatory mutations and recombinational events in the widely used MC4100 lineage of Escherichia coli K-12.</title>
        <authorList>
            <person name="Ferenci T."/>
            <person name="Zhou Z."/>
            <person name="Betteridge T."/>
            <person name="Ren Y."/>
            <person name="Liu Y."/>
            <person name="Feng L."/>
            <person name="Reeves P.R."/>
            <person name="Wang L."/>
        </authorList>
    </citation>
    <scope>NUCLEOTIDE SEQUENCE [LARGE SCALE GENOMIC DNA]</scope>
    <source>
        <strain>K12 / MC4100 / BW2952</strain>
    </source>
</reference>
<feature type="chain" id="PRO_1000212552" description="Probable Fe(2+)-trafficking protein">
    <location>
        <begin position="1"/>
        <end position="91"/>
    </location>
</feature>
<comment type="function">
    <text evidence="1">Could be a mediator in iron transactions between iron acquisition and iron-requiring processes, such as synthesis and/or repair of Fe-S clusters in biosynthetic enzymes.</text>
</comment>
<comment type="subunit">
    <text evidence="1">Monomer.</text>
</comment>
<comment type="similarity">
    <text evidence="1">Belongs to the Fe(2+)-trafficking protein family.</text>
</comment>
<sequence>MSRTIFCTFLQREAEGQDFQLYPGELGKRIYNEISKEAWAQWQHKQTMLINEKKLNMMNAEHRKLLEQEMVNFLFEGKEVHIEGYTPEDKK</sequence>
<name>FETP_ECOBW</name>
<accession>C5A0N1</accession>
<proteinExistence type="inferred from homology"/>
<protein>
    <recommendedName>
        <fullName evidence="1">Probable Fe(2+)-trafficking protein</fullName>
    </recommendedName>
</protein>
<dbReference type="EMBL" id="CP001396">
    <property type="protein sequence ID" value="ACR65319.1"/>
    <property type="molecule type" value="Genomic_DNA"/>
</dbReference>
<dbReference type="RefSeq" id="WP_000091700.1">
    <property type="nucleotide sequence ID" value="NC_012759.1"/>
</dbReference>
<dbReference type="SMR" id="C5A0N1"/>
<dbReference type="KEGG" id="ebw:BWG_2684"/>
<dbReference type="HOGENOM" id="CLU_170994_0_0_6"/>
<dbReference type="GO" id="GO:0005829">
    <property type="term" value="C:cytosol"/>
    <property type="evidence" value="ECO:0007669"/>
    <property type="project" value="TreeGrafter"/>
</dbReference>
<dbReference type="GO" id="GO:0005506">
    <property type="term" value="F:iron ion binding"/>
    <property type="evidence" value="ECO:0007669"/>
    <property type="project" value="UniProtKB-UniRule"/>
</dbReference>
<dbReference type="GO" id="GO:0034599">
    <property type="term" value="P:cellular response to oxidative stress"/>
    <property type="evidence" value="ECO:0007669"/>
    <property type="project" value="TreeGrafter"/>
</dbReference>
<dbReference type="FunFam" id="1.10.3880.10:FF:000001">
    <property type="entry name" value="Probable Fe(2+)-trafficking protein"/>
    <property type="match status" value="1"/>
</dbReference>
<dbReference type="Gene3D" id="1.10.3880.10">
    <property type="entry name" value="Fe(II) trafficking protein YggX"/>
    <property type="match status" value="1"/>
</dbReference>
<dbReference type="HAMAP" id="MF_00686">
    <property type="entry name" value="Fe_traffic_YggX"/>
    <property type="match status" value="1"/>
</dbReference>
<dbReference type="InterPro" id="IPR007457">
    <property type="entry name" value="Fe_traffick_prot_YggX"/>
</dbReference>
<dbReference type="InterPro" id="IPR036766">
    <property type="entry name" value="Fe_traffick_prot_YggX_sf"/>
</dbReference>
<dbReference type="NCBIfam" id="NF003817">
    <property type="entry name" value="PRK05408.1"/>
    <property type="match status" value="1"/>
</dbReference>
<dbReference type="PANTHER" id="PTHR36965">
    <property type="entry name" value="FE(2+)-TRAFFICKING PROTEIN-RELATED"/>
    <property type="match status" value="1"/>
</dbReference>
<dbReference type="PANTHER" id="PTHR36965:SF1">
    <property type="entry name" value="FE(2+)-TRAFFICKING PROTEIN-RELATED"/>
    <property type="match status" value="1"/>
</dbReference>
<dbReference type="Pfam" id="PF04362">
    <property type="entry name" value="Iron_traffic"/>
    <property type="match status" value="1"/>
</dbReference>
<dbReference type="PIRSF" id="PIRSF029827">
    <property type="entry name" value="Fe_traffic_YggX"/>
    <property type="match status" value="1"/>
</dbReference>
<dbReference type="SUPFAM" id="SSF111148">
    <property type="entry name" value="YggX-like"/>
    <property type="match status" value="1"/>
</dbReference>